<proteinExistence type="inferred from homology"/>
<sequence>MRSIIADSKRLVVKVGSSLVTNDGKGLDHAAIGRWAAQIAALRAQGKEVVLVSSGAIAEGMQRLGWSKRPREIDELQAAAAVGQMGLAQVYESRFTEHDIRTAQILLTHADLADRERYLNARSTMLTLLRLGVVPIINENDTVVTDEIKFGDNDTLGALVANLIEGDALIILTDQSGLFTADPRKDPNATLVAEANAGAPELEAMAGGAGSSLGRGGMLTKILAAKRAAHSGANTVIASGRETDVLVRLAAGEAIGTQLIARTARMAARKQWMADHLQVRGHVVIDAGAVEKLTAGGKSLLPIGVIDVQGAFARGEVIACVGPDGREVARGLTNYSSAETKLIHRKPSGEIESVLGYMLEPELIHRDNLVLV</sequence>
<comment type="function">
    <text evidence="1">Catalyzes the transfer of a phosphate group to glutamate to form L-glutamate 5-phosphate.</text>
</comment>
<comment type="catalytic activity">
    <reaction evidence="1">
        <text>L-glutamate + ATP = L-glutamyl 5-phosphate + ADP</text>
        <dbReference type="Rhea" id="RHEA:14877"/>
        <dbReference type="ChEBI" id="CHEBI:29985"/>
        <dbReference type="ChEBI" id="CHEBI:30616"/>
        <dbReference type="ChEBI" id="CHEBI:58274"/>
        <dbReference type="ChEBI" id="CHEBI:456216"/>
        <dbReference type="EC" id="2.7.2.11"/>
    </reaction>
</comment>
<comment type="pathway">
    <text evidence="1">Amino-acid biosynthesis; L-proline biosynthesis; L-glutamate 5-semialdehyde from L-glutamate: step 1/2.</text>
</comment>
<comment type="subcellular location">
    <subcellularLocation>
        <location evidence="1">Cytoplasm</location>
    </subcellularLocation>
</comment>
<comment type="similarity">
    <text evidence="1">Belongs to the glutamate 5-kinase family.</text>
</comment>
<keyword id="KW-0028">Amino-acid biosynthesis</keyword>
<keyword id="KW-0067">ATP-binding</keyword>
<keyword id="KW-0963">Cytoplasm</keyword>
<keyword id="KW-0418">Kinase</keyword>
<keyword id="KW-0547">Nucleotide-binding</keyword>
<keyword id="KW-0641">Proline biosynthesis</keyword>
<keyword id="KW-0808">Transferase</keyword>
<reference key="1">
    <citation type="submission" date="2005-10" db="EMBL/GenBank/DDBJ databases">
        <title>Complete sequence of chromosome 1 of Burkholderia sp. 383.</title>
        <authorList>
            <consortium name="US DOE Joint Genome Institute"/>
            <person name="Copeland A."/>
            <person name="Lucas S."/>
            <person name="Lapidus A."/>
            <person name="Barry K."/>
            <person name="Detter J.C."/>
            <person name="Glavina T."/>
            <person name="Hammon N."/>
            <person name="Israni S."/>
            <person name="Pitluck S."/>
            <person name="Chain P."/>
            <person name="Malfatti S."/>
            <person name="Shin M."/>
            <person name="Vergez L."/>
            <person name="Schmutz J."/>
            <person name="Larimer F."/>
            <person name="Land M."/>
            <person name="Kyrpides N."/>
            <person name="Lykidis A."/>
            <person name="Richardson P."/>
        </authorList>
    </citation>
    <scope>NUCLEOTIDE SEQUENCE [LARGE SCALE GENOMIC DNA]</scope>
    <source>
        <strain>ATCC 17760 / DSM 23089 / LMG 22485 / NCIMB 9086 / R18194 / 383</strain>
    </source>
</reference>
<protein>
    <recommendedName>
        <fullName evidence="1">Glutamate 5-kinase</fullName>
        <ecNumber evidence="1">2.7.2.11</ecNumber>
    </recommendedName>
    <alternativeName>
        <fullName evidence="1">Gamma-glutamyl kinase</fullName>
        <shortName evidence="1">GK</shortName>
    </alternativeName>
</protein>
<gene>
    <name evidence="1" type="primary">proB</name>
    <name type="ordered locus">Bcep18194_A3669</name>
</gene>
<name>PROB_BURL3</name>
<feature type="chain" id="PRO_0000230039" description="Glutamate 5-kinase">
    <location>
        <begin position="1"/>
        <end position="372"/>
    </location>
</feature>
<feature type="domain" description="PUA" evidence="1">
    <location>
        <begin position="280"/>
        <end position="358"/>
    </location>
</feature>
<feature type="binding site" evidence="1">
    <location>
        <position position="14"/>
    </location>
    <ligand>
        <name>ATP</name>
        <dbReference type="ChEBI" id="CHEBI:30616"/>
    </ligand>
</feature>
<feature type="binding site" evidence="1">
    <location>
        <position position="54"/>
    </location>
    <ligand>
        <name>substrate</name>
    </ligand>
</feature>
<feature type="binding site" evidence="1">
    <location>
        <position position="141"/>
    </location>
    <ligand>
        <name>substrate</name>
    </ligand>
</feature>
<feature type="binding site" evidence="1">
    <location>
        <position position="153"/>
    </location>
    <ligand>
        <name>substrate</name>
    </ligand>
</feature>
<feature type="binding site" evidence="1">
    <location>
        <begin position="173"/>
        <end position="174"/>
    </location>
    <ligand>
        <name>ATP</name>
        <dbReference type="ChEBI" id="CHEBI:30616"/>
    </ligand>
</feature>
<evidence type="ECO:0000255" key="1">
    <source>
        <dbReference type="HAMAP-Rule" id="MF_00456"/>
    </source>
</evidence>
<accession>Q39JU6</accession>
<dbReference type="EC" id="2.7.2.11" evidence="1"/>
<dbReference type="EMBL" id="CP000151">
    <property type="protein sequence ID" value="ABB07270.1"/>
    <property type="molecule type" value="Genomic_DNA"/>
</dbReference>
<dbReference type="RefSeq" id="WP_011350860.1">
    <property type="nucleotide sequence ID" value="NZ_WNDV01000019.1"/>
</dbReference>
<dbReference type="SMR" id="Q39JU6"/>
<dbReference type="GeneID" id="45093583"/>
<dbReference type="KEGG" id="bur:Bcep18194_A3669"/>
<dbReference type="PATRIC" id="fig|482957.22.peg.523"/>
<dbReference type="HOGENOM" id="CLU_025400_2_0_4"/>
<dbReference type="UniPathway" id="UPA00098">
    <property type="reaction ID" value="UER00359"/>
</dbReference>
<dbReference type="Proteomes" id="UP000002705">
    <property type="component" value="Chromosome 1"/>
</dbReference>
<dbReference type="GO" id="GO:0005829">
    <property type="term" value="C:cytosol"/>
    <property type="evidence" value="ECO:0007669"/>
    <property type="project" value="TreeGrafter"/>
</dbReference>
<dbReference type="GO" id="GO:0005524">
    <property type="term" value="F:ATP binding"/>
    <property type="evidence" value="ECO:0007669"/>
    <property type="project" value="UniProtKB-KW"/>
</dbReference>
<dbReference type="GO" id="GO:0004349">
    <property type="term" value="F:glutamate 5-kinase activity"/>
    <property type="evidence" value="ECO:0007669"/>
    <property type="project" value="UniProtKB-UniRule"/>
</dbReference>
<dbReference type="GO" id="GO:0003723">
    <property type="term" value="F:RNA binding"/>
    <property type="evidence" value="ECO:0007669"/>
    <property type="project" value="InterPro"/>
</dbReference>
<dbReference type="GO" id="GO:0055129">
    <property type="term" value="P:L-proline biosynthetic process"/>
    <property type="evidence" value="ECO:0007669"/>
    <property type="project" value="UniProtKB-UniRule"/>
</dbReference>
<dbReference type="CDD" id="cd04242">
    <property type="entry name" value="AAK_G5K_ProB"/>
    <property type="match status" value="1"/>
</dbReference>
<dbReference type="CDD" id="cd21157">
    <property type="entry name" value="PUA_G5K"/>
    <property type="match status" value="1"/>
</dbReference>
<dbReference type="FunFam" id="2.30.130.10:FF:000007">
    <property type="entry name" value="Glutamate 5-kinase"/>
    <property type="match status" value="1"/>
</dbReference>
<dbReference type="FunFam" id="3.40.1160.10:FF:000018">
    <property type="entry name" value="Glutamate 5-kinase"/>
    <property type="match status" value="1"/>
</dbReference>
<dbReference type="Gene3D" id="3.40.1160.10">
    <property type="entry name" value="Acetylglutamate kinase-like"/>
    <property type="match status" value="1"/>
</dbReference>
<dbReference type="Gene3D" id="2.30.130.10">
    <property type="entry name" value="PUA domain"/>
    <property type="match status" value="1"/>
</dbReference>
<dbReference type="HAMAP" id="MF_00456">
    <property type="entry name" value="ProB"/>
    <property type="match status" value="1"/>
</dbReference>
<dbReference type="InterPro" id="IPR036393">
    <property type="entry name" value="AceGlu_kinase-like_sf"/>
</dbReference>
<dbReference type="InterPro" id="IPR001048">
    <property type="entry name" value="Asp/Glu/Uridylate_kinase"/>
</dbReference>
<dbReference type="InterPro" id="IPR041739">
    <property type="entry name" value="G5K_ProB"/>
</dbReference>
<dbReference type="InterPro" id="IPR001057">
    <property type="entry name" value="Glu/AcGlu_kinase"/>
</dbReference>
<dbReference type="InterPro" id="IPR011529">
    <property type="entry name" value="Glu_5kinase"/>
</dbReference>
<dbReference type="InterPro" id="IPR005715">
    <property type="entry name" value="Glu_5kinase/COase_Synthase"/>
</dbReference>
<dbReference type="InterPro" id="IPR019797">
    <property type="entry name" value="Glutamate_5-kinase_CS"/>
</dbReference>
<dbReference type="InterPro" id="IPR002478">
    <property type="entry name" value="PUA"/>
</dbReference>
<dbReference type="InterPro" id="IPR015947">
    <property type="entry name" value="PUA-like_sf"/>
</dbReference>
<dbReference type="InterPro" id="IPR036974">
    <property type="entry name" value="PUA_sf"/>
</dbReference>
<dbReference type="NCBIfam" id="TIGR01027">
    <property type="entry name" value="proB"/>
    <property type="match status" value="1"/>
</dbReference>
<dbReference type="PANTHER" id="PTHR43654">
    <property type="entry name" value="GLUTAMATE 5-KINASE"/>
    <property type="match status" value="1"/>
</dbReference>
<dbReference type="PANTHER" id="PTHR43654:SF1">
    <property type="entry name" value="ISOPENTENYL PHOSPHATE KINASE"/>
    <property type="match status" value="1"/>
</dbReference>
<dbReference type="Pfam" id="PF00696">
    <property type="entry name" value="AA_kinase"/>
    <property type="match status" value="1"/>
</dbReference>
<dbReference type="Pfam" id="PF01472">
    <property type="entry name" value="PUA"/>
    <property type="match status" value="1"/>
</dbReference>
<dbReference type="PIRSF" id="PIRSF000729">
    <property type="entry name" value="GK"/>
    <property type="match status" value="1"/>
</dbReference>
<dbReference type="PRINTS" id="PR00474">
    <property type="entry name" value="GLU5KINASE"/>
</dbReference>
<dbReference type="SMART" id="SM00359">
    <property type="entry name" value="PUA"/>
    <property type="match status" value="1"/>
</dbReference>
<dbReference type="SUPFAM" id="SSF53633">
    <property type="entry name" value="Carbamate kinase-like"/>
    <property type="match status" value="1"/>
</dbReference>
<dbReference type="SUPFAM" id="SSF88697">
    <property type="entry name" value="PUA domain-like"/>
    <property type="match status" value="1"/>
</dbReference>
<dbReference type="PROSITE" id="PS00902">
    <property type="entry name" value="GLUTAMATE_5_KINASE"/>
    <property type="match status" value="1"/>
</dbReference>
<dbReference type="PROSITE" id="PS50890">
    <property type="entry name" value="PUA"/>
    <property type="match status" value="1"/>
</dbReference>
<organism>
    <name type="scientific">Burkholderia lata (strain ATCC 17760 / DSM 23089 / LMG 22485 / NCIMB 9086 / R18194 / 383)</name>
    <dbReference type="NCBI Taxonomy" id="482957"/>
    <lineage>
        <taxon>Bacteria</taxon>
        <taxon>Pseudomonadati</taxon>
        <taxon>Pseudomonadota</taxon>
        <taxon>Betaproteobacteria</taxon>
        <taxon>Burkholderiales</taxon>
        <taxon>Burkholderiaceae</taxon>
        <taxon>Burkholderia</taxon>
        <taxon>Burkholderia cepacia complex</taxon>
    </lineage>
</organism>